<gene>
    <name evidence="1" type="primary">ligA</name>
    <name type="ordered locus">SAG0850</name>
</gene>
<sequence>MENRMNELVSLLNQYAKEYYTQDNPTVSDSQYDQLYRELVELEKQHPENILPNSPTHRVGGLVLEGFEKYQHEYPLYSLQDAFSKEELIAFDKRVKAEFPTAAYMAELKIDGLSVSLTYVNGVLQVGATRGDGNIGENITENLKRVHDIPLHLDQSLDITVRGECYLPKESFEAINIEKRANGEQEFANPRNAAAGTLRQLNTGIVAKRKLATFLYQEASPTQKETQDDVLKELESYGFSVNHHRLISSSMEKIWDFIQTIEKDRVSLPYDIDGIVIKVNSIAMQEELGFTVKAPRWAIAYKFPAEEKEAEILSVDWTVGRTGVVTPTANLTPVQLAGTTVSRATLHNVDYIAEKDIRIGDTVVVYKAGDIIPAVLNVVMSKRNQQEVMLIPKLCPSCGSELVHFEGEVALRCINPLCPNQIKERLAHFASRDAMNITGFGPSLVEKLFDAHLIADVADIYRLSIENLLTLDGIKEKSATKIYHAIQSSKENSAEKLLFGLGIRHVGSKASRLLLEEFGNLRQLSQASQESIASIDGLGGVIAKSLHTFFEKEEVDKLLEELTSYNVNFNYLGKRVSTDAQLSGLTVVLTGKLEKMTRNEAKEKLQNLGAKVTGSVSKKTDLIVAGSDAGSKLTKAQDLGITIQDEDWLLNL</sequence>
<keyword id="KW-0227">DNA damage</keyword>
<keyword id="KW-0234">DNA repair</keyword>
<keyword id="KW-0235">DNA replication</keyword>
<keyword id="KW-0436">Ligase</keyword>
<keyword id="KW-0460">Magnesium</keyword>
<keyword id="KW-0464">Manganese</keyword>
<keyword id="KW-0479">Metal-binding</keyword>
<keyword id="KW-0520">NAD</keyword>
<keyword id="KW-1185">Reference proteome</keyword>
<keyword id="KW-0862">Zinc</keyword>
<reference key="1">
    <citation type="journal article" date="2002" name="Proc. Natl. Acad. Sci. U.S.A.">
        <title>Complete genome sequence and comparative genomic analysis of an emerging human pathogen, serotype V Streptococcus agalactiae.</title>
        <authorList>
            <person name="Tettelin H."/>
            <person name="Masignani V."/>
            <person name="Cieslewicz M.J."/>
            <person name="Eisen J.A."/>
            <person name="Peterson S.N."/>
            <person name="Wessels M.R."/>
            <person name="Paulsen I.T."/>
            <person name="Nelson K.E."/>
            <person name="Margarit I."/>
            <person name="Read T.D."/>
            <person name="Madoff L.C."/>
            <person name="Wolf A.M."/>
            <person name="Beanan M.J."/>
            <person name="Brinkac L.M."/>
            <person name="Daugherty S.C."/>
            <person name="DeBoy R.T."/>
            <person name="Durkin A.S."/>
            <person name="Kolonay J.F."/>
            <person name="Madupu R."/>
            <person name="Lewis M.R."/>
            <person name="Radune D."/>
            <person name="Fedorova N.B."/>
            <person name="Scanlan D."/>
            <person name="Khouri H.M."/>
            <person name="Mulligan S."/>
            <person name="Carty H.A."/>
            <person name="Cline R.T."/>
            <person name="Van Aken S.E."/>
            <person name="Gill J."/>
            <person name="Scarselli M."/>
            <person name="Mora M."/>
            <person name="Iacobini E.T."/>
            <person name="Brettoni C."/>
            <person name="Galli G."/>
            <person name="Mariani M."/>
            <person name="Vegni F."/>
            <person name="Maione D."/>
            <person name="Rinaudo D."/>
            <person name="Rappuoli R."/>
            <person name="Telford J.L."/>
            <person name="Kasper D.L."/>
            <person name="Grandi G."/>
            <person name="Fraser C.M."/>
        </authorList>
    </citation>
    <scope>NUCLEOTIDE SEQUENCE [LARGE SCALE GENOMIC DNA]</scope>
    <source>
        <strain>ATCC BAA-611 / 2603 V/R</strain>
    </source>
</reference>
<dbReference type="EC" id="6.5.1.2" evidence="1"/>
<dbReference type="EMBL" id="AE009948">
    <property type="protein sequence ID" value="AAM99737.1"/>
    <property type="molecule type" value="Genomic_DNA"/>
</dbReference>
<dbReference type="RefSeq" id="NP_687865.1">
    <property type="nucleotide sequence ID" value="NC_004116.1"/>
</dbReference>
<dbReference type="RefSeq" id="WP_001880222.1">
    <property type="nucleotide sequence ID" value="NC_004116.1"/>
</dbReference>
<dbReference type="SMR" id="Q8E084"/>
<dbReference type="STRING" id="208435.SAG0850"/>
<dbReference type="KEGG" id="sag:SAG0850"/>
<dbReference type="PATRIC" id="fig|208435.3.peg.856"/>
<dbReference type="HOGENOM" id="CLU_007764_2_1_9"/>
<dbReference type="OrthoDB" id="9759736at2"/>
<dbReference type="Proteomes" id="UP000000821">
    <property type="component" value="Chromosome"/>
</dbReference>
<dbReference type="GO" id="GO:0005829">
    <property type="term" value="C:cytosol"/>
    <property type="evidence" value="ECO:0007669"/>
    <property type="project" value="TreeGrafter"/>
</dbReference>
<dbReference type="GO" id="GO:0003677">
    <property type="term" value="F:DNA binding"/>
    <property type="evidence" value="ECO:0007669"/>
    <property type="project" value="InterPro"/>
</dbReference>
<dbReference type="GO" id="GO:0003911">
    <property type="term" value="F:DNA ligase (NAD+) activity"/>
    <property type="evidence" value="ECO:0007669"/>
    <property type="project" value="UniProtKB-UniRule"/>
</dbReference>
<dbReference type="GO" id="GO:0046872">
    <property type="term" value="F:metal ion binding"/>
    <property type="evidence" value="ECO:0007669"/>
    <property type="project" value="UniProtKB-KW"/>
</dbReference>
<dbReference type="GO" id="GO:0006281">
    <property type="term" value="P:DNA repair"/>
    <property type="evidence" value="ECO:0007669"/>
    <property type="project" value="UniProtKB-KW"/>
</dbReference>
<dbReference type="GO" id="GO:0006260">
    <property type="term" value="P:DNA replication"/>
    <property type="evidence" value="ECO:0007669"/>
    <property type="project" value="UniProtKB-KW"/>
</dbReference>
<dbReference type="CDD" id="cd17748">
    <property type="entry name" value="BRCT_DNA_ligase_like"/>
    <property type="match status" value="1"/>
</dbReference>
<dbReference type="CDD" id="cd00114">
    <property type="entry name" value="LIGANc"/>
    <property type="match status" value="1"/>
</dbReference>
<dbReference type="FunFam" id="1.10.150.20:FF:000006">
    <property type="entry name" value="DNA ligase"/>
    <property type="match status" value="1"/>
</dbReference>
<dbReference type="FunFam" id="1.10.150.20:FF:000007">
    <property type="entry name" value="DNA ligase"/>
    <property type="match status" value="1"/>
</dbReference>
<dbReference type="FunFam" id="2.40.50.140:FF:000012">
    <property type="entry name" value="DNA ligase"/>
    <property type="match status" value="1"/>
</dbReference>
<dbReference type="FunFam" id="3.30.470.30:FF:000001">
    <property type="entry name" value="DNA ligase"/>
    <property type="match status" value="1"/>
</dbReference>
<dbReference type="Gene3D" id="6.20.10.30">
    <property type="match status" value="1"/>
</dbReference>
<dbReference type="Gene3D" id="1.10.150.20">
    <property type="entry name" value="5' to 3' exonuclease, C-terminal subdomain"/>
    <property type="match status" value="2"/>
</dbReference>
<dbReference type="Gene3D" id="3.40.50.10190">
    <property type="entry name" value="BRCT domain"/>
    <property type="match status" value="1"/>
</dbReference>
<dbReference type="Gene3D" id="3.30.470.30">
    <property type="entry name" value="DNA ligase/mRNA capping enzyme"/>
    <property type="match status" value="1"/>
</dbReference>
<dbReference type="Gene3D" id="1.10.287.610">
    <property type="entry name" value="Helix hairpin bin"/>
    <property type="match status" value="1"/>
</dbReference>
<dbReference type="Gene3D" id="2.40.50.140">
    <property type="entry name" value="Nucleic acid-binding proteins"/>
    <property type="match status" value="1"/>
</dbReference>
<dbReference type="HAMAP" id="MF_01588">
    <property type="entry name" value="DNA_ligase_A"/>
    <property type="match status" value="1"/>
</dbReference>
<dbReference type="InterPro" id="IPR001357">
    <property type="entry name" value="BRCT_dom"/>
</dbReference>
<dbReference type="InterPro" id="IPR036420">
    <property type="entry name" value="BRCT_dom_sf"/>
</dbReference>
<dbReference type="InterPro" id="IPR041663">
    <property type="entry name" value="DisA/LigA_HHH"/>
</dbReference>
<dbReference type="InterPro" id="IPR001679">
    <property type="entry name" value="DNA_ligase"/>
</dbReference>
<dbReference type="InterPro" id="IPR018239">
    <property type="entry name" value="DNA_ligase_AS"/>
</dbReference>
<dbReference type="InterPro" id="IPR033136">
    <property type="entry name" value="DNA_ligase_CS"/>
</dbReference>
<dbReference type="InterPro" id="IPR013839">
    <property type="entry name" value="DNAligase_adenylation"/>
</dbReference>
<dbReference type="InterPro" id="IPR013840">
    <property type="entry name" value="DNAligase_N"/>
</dbReference>
<dbReference type="InterPro" id="IPR003583">
    <property type="entry name" value="Hlx-hairpin-Hlx_DNA-bd_motif"/>
</dbReference>
<dbReference type="InterPro" id="IPR012340">
    <property type="entry name" value="NA-bd_OB-fold"/>
</dbReference>
<dbReference type="InterPro" id="IPR004150">
    <property type="entry name" value="NAD_DNA_ligase_OB"/>
</dbReference>
<dbReference type="InterPro" id="IPR010994">
    <property type="entry name" value="RuvA_2-like"/>
</dbReference>
<dbReference type="InterPro" id="IPR004149">
    <property type="entry name" value="Znf_DNAligase_C4"/>
</dbReference>
<dbReference type="NCBIfam" id="TIGR00575">
    <property type="entry name" value="dnlj"/>
    <property type="match status" value="1"/>
</dbReference>
<dbReference type="NCBIfam" id="NF005932">
    <property type="entry name" value="PRK07956.1"/>
    <property type="match status" value="1"/>
</dbReference>
<dbReference type="PANTHER" id="PTHR23389">
    <property type="entry name" value="CHROMOSOME TRANSMISSION FIDELITY FACTOR 18"/>
    <property type="match status" value="1"/>
</dbReference>
<dbReference type="PANTHER" id="PTHR23389:SF9">
    <property type="entry name" value="DNA LIGASE"/>
    <property type="match status" value="1"/>
</dbReference>
<dbReference type="Pfam" id="PF00533">
    <property type="entry name" value="BRCT"/>
    <property type="match status" value="1"/>
</dbReference>
<dbReference type="Pfam" id="PF01653">
    <property type="entry name" value="DNA_ligase_aden"/>
    <property type="match status" value="1"/>
</dbReference>
<dbReference type="Pfam" id="PF03120">
    <property type="entry name" value="DNA_ligase_OB"/>
    <property type="match status" value="1"/>
</dbReference>
<dbReference type="Pfam" id="PF03119">
    <property type="entry name" value="DNA_ligase_ZBD"/>
    <property type="match status" value="1"/>
</dbReference>
<dbReference type="Pfam" id="PF12826">
    <property type="entry name" value="HHH_2"/>
    <property type="match status" value="1"/>
</dbReference>
<dbReference type="Pfam" id="PF14520">
    <property type="entry name" value="HHH_5"/>
    <property type="match status" value="1"/>
</dbReference>
<dbReference type="Pfam" id="PF22745">
    <property type="entry name" value="Nlig-Ia"/>
    <property type="match status" value="1"/>
</dbReference>
<dbReference type="PIRSF" id="PIRSF001604">
    <property type="entry name" value="LigA"/>
    <property type="match status" value="1"/>
</dbReference>
<dbReference type="SMART" id="SM00292">
    <property type="entry name" value="BRCT"/>
    <property type="match status" value="1"/>
</dbReference>
<dbReference type="SMART" id="SM00278">
    <property type="entry name" value="HhH1"/>
    <property type="match status" value="3"/>
</dbReference>
<dbReference type="SMART" id="SM00532">
    <property type="entry name" value="LIGANc"/>
    <property type="match status" value="1"/>
</dbReference>
<dbReference type="SUPFAM" id="SSF52113">
    <property type="entry name" value="BRCT domain"/>
    <property type="match status" value="1"/>
</dbReference>
<dbReference type="SUPFAM" id="SSF56091">
    <property type="entry name" value="DNA ligase/mRNA capping enzyme, catalytic domain"/>
    <property type="match status" value="1"/>
</dbReference>
<dbReference type="SUPFAM" id="SSF50249">
    <property type="entry name" value="Nucleic acid-binding proteins"/>
    <property type="match status" value="1"/>
</dbReference>
<dbReference type="SUPFAM" id="SSF47781">
    <property type="entry name" value="RuvA domain 2-like"/>
    <property type="match status" value="1"/>
</dbReference>
<dbReference type="PROSITE" id="PS50172">
    <property type="entry name" value="BRCT"/>
    <property type="match status" value="1"/>
</dbReference>
<dbReference type="PROSITE" id="PS01055">
    <property type="entry name" value="DNA_LIGASE_N1"/>
    <property type="match status" value="1"/>
</dbReference>
<dbReference type="PROSITE" id="PS01056">
    <property type="entry name" value="DNA_LIGASE_N2"/>
    <property type="match status" value="1"/>
</dbReference>
<proteinExistence type="inferred from homology"/>
<protein>
    <recommendedName>
        <fullName evidence="1">DNA ligase</fullName>
        <ecNumber evidence="1">6.5.1.2</ecNumber>
    </recommendedName>
    <alternativeName>
        <fullName evidence="1">Polydeoxyribonucleotide synthase [NAD(+)]</fullName>
    </alternativeName>
</protein>
<feature type="chain" id="PRO_0000313452" description="DNA ligase">
    <location>
        <begin position="1"/>
        <end position="652"/>
    </location>
</feature>
<feature type="domain" description="BRCT" evidence="1">
    <location>
        <begin position="577"/>
        <end position="652"/>
    </location>
</feature>
<feature type="active site" description="N6-AMP-lysine intermediate" evidence="1">
    <location>
        <position position="109"/>
    </location>
</feature>
<feature type="binding site" evidence="1">
    <location>
        <begin position="29"/>
        <end position="33"/>
    </location>
    <ligand>
        <name>NAD(+)</name>
        <dbReference type="ChEBI" id="CHEBI:57540"/>
    </ligand>
</feature>
<feature type="binding site" evidence="1">
    <location>
        <begin position="78"/>
        <end position="79"/>
    </location>
    <ligand>
        <name>NAD(+)</name>
        <dbReference type="ChEBI" id="CHEBI:57540"/>
    </ligand>
</feature>
<feature type="binding site" evidence="1">
    <location>
        <position position="107"/>
    </location>
    <ligand>
        <name>NAD(+)</name>
        <dbReference type="ChEBI" id="CHEBI:57540"/>
    </ligand>
</feature>
<feature type="binding site" evidence="1">
    <location>
        <position position="130"/>
    </location>
    <ligand>
        <name>NAD(+)</name>
        <dbReference type="ChEBI" id="CHEBI:57540"/>
    </ligand>
</feature>
<feature type="binding site" evidence="1">
    <location>
        <position position="164"/>
    </location>
    <ligand>
        <name>NAD(+)</name>
        <dbReference type="ChEBI" id="CHEBI:57540"/>
    </ligand>
</feature>
<feature type="binding site" evidence="1">
    <location>
        <position position="278"/>
    </location>
    <ligand>
        <name>NAD(+)</name>
        <dbReference type="ChEBI" id="CHEBI:57540"/>
    </ligand>
</feature>
<feature type="binding site" evidence="1">
    <location>
        <position position="302"/>
    </location>
    <ligand>
        <name>NAD(+)</name>
        <dbReference type="ChEBI" id="CHEBI:57540"/>
    </ligand>
</feature>
<feature type="binding site" evidence="1">
    <location>
        <position position="395"/>
    </location>
    <ligand>
        <name>Zn(2+)</name>
        <dbReference type="ChEBI" id="CHEBI:29105"/>
    </ligand>
</feature>
<feature type="binding site" evidence="1">
    <location>
        <position position="398"/>
    </location>
    <ligand>
        <name>Zn(2+)</name>
        <dbReference type="ChEBI" id="CHEBI:29105"/>
    </ligand>
</feature>
<feature type="binding site" evidence="1">
    <location>
        <position position="413"/>
    </location>
    <ligand>
        <name>Zn(2+)</name>
        <dbReference type="ChEBI" id="CHEBI:29105"/>
    </ligand>
</feature>
<feature type="binding site" evidence="1">
    <location>
        <position position="418"/>
    </location>
    <ligand>
        <name>Zn(2+)</name>
        <dbReference type="ChEBI" id="CHEBI:29105"/>
    </ligand>
</feature>
<comment type="function">
    <text evidence="1">DNA ligase that catalyzes the formation of phosphodiester linkages between 5'-phosphoryl and 3'-hydroxyl groups in double-stranded DNA using NAD as a coenzyme and as the energy source for the reaction. It is essential for DNA replication and repair of damaged DNA.</text>
</comment>
<comment type="catalytic activity">
    <reaction evidence="1">
        <text>NAD(+) + (deoxyribonucleotide)n-3'-hydroxyl + 5'-phospho-(deoxyribonucleotide)m = (deoxyribonucleotide)n+m + AMP + beta-nicotinamide D-nucleotide.</text>
        <dbReference type="EC" id="6.5.1.2"/>
    </reaction>
</comment>
<comment type="cofactor">
    <cofactor evidence="1">
        <name>Mg(2+)</name>
        <dbReference type="ChEBI" id="CHEBI:18420"/>
    </cofactor>
    <cofactor evidence="1">
        <name>Mn(2+)</name>
        <dbReference type="ChEBI" id="CHEBI:29035"/>
    </cofactor>
</comment>
<comment type="similarity">
    <text evidence="1">Belongs to the NAD-dependent DNA ligase family. LigA subfamily.</text>
</comment>
<organism>
    <name type="scientific">Streptococcus agalactiae serotype V (strain ATCC BAA-611 / 2603 V/R)</name>
    <dbReference type="NCBI Taxonomy" id="208435"/>
    <lineage>
        <taxon>Bacteria</taxon>
        <taxon>Bacillati</taxon>
        <taxon>Bacillota</taxon>
        <taxon>Bacilli</taxon>
        <taxon>Lactobacillales</taxon>
        <taxon>Streptococcaceae</taxon>
        <taxon>Streptococcus</taxon>
    </lineage>
</organism>
<evidence type="ECO:0000255" key="1">
    <source>
        <dbReference type="HAMAP-Rule" id="MF_01588"/>
    </source>
</evidence>
<accession>Q8E084</accession>
<name>DNLJ_STRA5</name>